<keyword id="KW-0963">Cytoplasm</keyword>
<keyword id="KW-0255">Endonuclease</keyword>
<keyword id="KW-0378">Hydrolase</keyword>
<keyword id="KW-0479">Metal-binding</keyword>
<keyword id="KW-0540">Nuclease</keyword>
<keyword id="KW-0819">tRNA processing</keyword>
<keyword id="KW-0862">Zinc</keyword>
<feature type="chain" id="PRO_1000212864" description="Ribonuclease P protein component 4">
    <location>
        <begin position="1"/>
        <end position="104"/>
    </location>
</feature>
<feature type="binding site" evidence="1">
    <location>
        <position position="57"/>
    </location>
    <ligand>
        <name>Zn(2+)</name>
        <dbReference type="ChEBI" id="CHEBI:29105"/>
    </ligand>
</feature>
<feature type="binding site" evidence="1">
    <location>
        <position position="60"/>
    </location>
    <ligand>
        <name>Zn(2+)</name>
        <dbReference type="ChEBI" id="CHEBI:29105"/>
    </ligand>
</feature>
<feature type="binding site" evidence="1">
    <location>
        <position position="83"/>
    </location>
    <ligand>
        <name>Zn(2+)</name>
        <dbReference type="ChEBI" id="CHEBI:29105"/>
    </ligand>
</feature>
<feature type="binding site" evidence="1">
    <location>
        <position position="86"/>
    </location>
    <ligand>
        <name>Zn(2+)</name>
        <dbReference type="ChEBI" id="CHEBI:29105"/>
    </ligand>
</feature>
<evidence type="ECO:0000255" key="1">
    <source>
        <dbReference type="HAMAP-Rule" id="MF_00757"/>
    </source>
</evidence>
<reference key="1">
    <citation type="journal article" date="2009" name="Proc. Natl. Acad. Sci. U.S.A.">
        <title>Biogeography of the Sulfolobus islandicus pan-genome.</title>
        <authorList>
            <person name="Reno M.L."/>
            <person name="Held N.L."/>
            <person name="Fields C.J."/>
            <person name="Burke P.V."/>
            <person name="Whitaker R.J."/>
        </authorList>
    </citation>
    <scope>NUCLEOTIDE SEQUENCE [LARGE SCALE GENOMIC DNA]</scope>
    <source>
        <strain>L.S.2.15 / Lassen #1</strain>
    </source>
</reference>
<name>RNP4_SACI2</name>
<proteinExistence type="inferred from homology"/>
<sequence length="104" mass="12622">MRIKNKIKKRIIELIELAYITARKGDLELAREYIKLAEMYSRKGRIKIPLKYKRMFCRKCYTPLITGVTERRRIRSKILIRTCLICNWQRRYVLSRNKGSNKEN</sequence>
<dbReference type="EC" id="3.1.26.5" evidence="1"/>
<dbReference type="EMBL" id="CP001399">
    <property type="protein sequence ID" value="ACP34196.1"/>
    <property type="molecule type" value="Genomic_DNA"/>
</dbReference>
<dbReference type="RefSeq" id="WP_012712725.1">
    <property type="nucleotide sequence ID" value="NC_012589.1"/>
</dbReference>
<dbReference type="SMR" id="C3MJB8"/>
<dbReference type="GeneID" id="7805939"/>
<dbReference type="KEGG" id="sis:LS215_0042"/>
<dbReference type="HOGENOM" id="CLU_079140_3_1_2"/>
<dbReference type="OrthoDB" id="10058at2157"/>
<dbReference type="Proteomes" id="UP000001747">
    <property type="component" value="Chromosome"/>
</dbReference>
<dbReference type="GO" id="GO:0005737">
    <property type="term" value="C:cytoplasm"/>
    <property type="evidence" value="ECO:0007669"/>
    <property type="project" value="UniProtKB-SubCell"/>
</dbReference>
<dbReference type="GO" id="GO:0030677">
    <property type="term" value="C:ribonuclease P complex"/>
    <property type="evidence" value="ECO:0007669"/>
    <property type="project" value="UniProtKB-UniRule"/>
</dbReference>
<dbReference type="GO" id="GO:0004526">
    <property type="term" value="F:ribonuclease P activity"/>
    <property type="evidence" value="ECO:0007669"/>
    <property type="project" value="UniProtKB-UniRule"/>
</dbReference>
<dbReference type="GO" id="GO:0008270">
    <property type="term" value="F:zinc ion binding"/>
    <property type="evidence" value="ECO:0007669"/>
    <property type="project" value="UniProtKB-UniRule"/>
</dbReference>
<dbReference type="GO" id="GO:0001682">
    <property type="term" value="P:tRNA 5'-leader removal"/>
    <property type="evidence" value="ECO:0007669"/>
    <property type="project" value="UniProtKB-UniRule"/>
</dbReference>
<dbReference type="Gene3D" id="6.20.50.20">
    <property type="match status" value="1"/>
</dbReference>
<dbReference type="Gene3D" id="1.20.5.420">
    <property type="entry name" value="Immunoglobulin FC, subunit C"/>
    <property type="match status" value="1"/>
</dbReference>
<dbReference type="HAMAP" id="MF_00757">
    <property type="entry name" value="RNase_P_4"/>
    <property type="match status" value="1"/>
</dbReference>
<dbReference type="InterPro" id="IPR016432">
    <property type="entry name" value="RNP4"/>
</dbReference>
<dbReference type="InterPro" id="IPR007175">
    <property type="entry name" value="Rpr2/Snm1/Rpp21"/>
</dbReference>
<dbReference type="PANTHER" id="PTHR14742:SF0">
    <property type="entry name" value="RIBONUCLEASE P PROTEIN SUBUNIT P21"/>
    <property type="match status" value="1"/>
</dbReference>
<dbReference type="PANTHER" id="PTHR14742">
    <property type="entry name" value="RIBONUCLEASE P SUBUNIT P21"/>
    <property type="match status" value="1"/>
</dbReference>
<dbReference type="Pfam" id="PF04032">
    <property type="entry name" value="Rpr2"/>
    <property type="match status" value="1"/>
</dbReference>
<dbReference type="PIRSF" id="PIRSF004878">
    <property type="entry name" value="RNase_P_4"/>
    <property type="match status" value="1"/>
</dbReference>
<gene>
    <name evidence="1" type="primary">rnp4</name>
    <name type="ordered locus">LS215_0042</name>
</gene>
<protein>
    <recommendedName>
        <fullName evidence="1">Ribonuclease P protein component 4</fullName>
        <shortName evidence="1">RNase P component 4</shortName>
        <ecNumber evidence="1">3.1.26.5</ecNumber>
    </recommendedName>
    <alternativeName>
        <fullName evidence="1">Rpp21</fullName>
    </alternativeName>
</protein>
<organism>
    <name type="scientific">Saccharolobus islandicus (strain L.S.2.15 / Lassen #1)</name>
    <name type="common">Sulfolobus islandicus</name>
    <dbReference type="NCBI Taxonomy" id="429572"/>
    <lineage>
        <taxon>Archaea</taxon>
        <taxon>Thermoproteota</taxon>
        <taxon>Thermoprotei</taxon>
        <taxon>Sulfolobales</taxon>
        <taxon>Sulfolobaceae</taxon>
        <taxon>Saccharolobus</taxon>
    </lineage>
</organism>
<accession>C3MJB8</accession>
<comment type="function">
    <text evidence="1">Part of ribonuclease P, a protein complex that generates mature tRNA molecules by cleaving their 5'-ends.</text>
</comment>
<comment type="catalytic activity">
    <reaction evidence="1">
        <text>Endonucleolytic cleavage of RNA, removing 5'-extranucleotides from tRNA precursor.</text>
        <dbReference type="EC" id="3.1.26.5"/>
    </reaction>
</comment>
<comment type="cofactor">
    <cofactor evidence="1">
        <name>Zn(2+)</name>
        <dbReference type="ChEBI" id="CHEBI:29105"/>
    </cofactor>
    <text evidence="1">Binds 1 zinc ion per subunit.</text>
</comment>
<comment type="subunit">
    <text evidence="1">Consists of a catalytic RNA component and at least 4-5 protein subunits.</text>
</comment>
<comment type="subcellular location">
    <subcellularLocation>
        <location evidence="1">Cytoplasm</location>
    </subcellularLocation>
</comment>
<comment type="similarity">
    <text evidence="1">Belongs to the eukaryotic/archaeal RNase P protein component 4 family.</text>
</comment>